<name>CD37L_HUMAN</name>
<feature type="chain" id="PRO_0000318521" description="Hsp90 co-chaperone Cdc37-like 1">
    <location>
        <begin position="1"/>
        <end position="337"/>
    </location>
</feature>
<feature type="region of interest" description="Disordered" evidence="3">
    <location>
        <begin position="1"/>
        <end position="40"/>
    </location>
</feature>
<feature type="region of interest" description="Self-association">
    <location>
        <begin position="2"/>
        <end position="171"/>
    </location>
</feature>
<feature type="region of interest" description="Self-association and interaction with Hsp90">
    <location>
        <begin position="147"/>
        <end position="277"/>
    </location>
</feature>
<feature type="region of interest" description="Interaction with Hsp70">
    <location>
        <begin position="267"/>
        <end position="337"/>
    </location>
</feature>
<feature type="region of interest" description="Required for interaction with STIP1">
    <location>
        <begin position="278"/>
        <end position="337"/>
    </location>
</feature>
<feature type="coiled-coil region" evidence="2">
    <location>
        <begin position="84"/>
        <end position="122"/>
    </location>
</feature>
<feature type="compositionally biased region" description="Pro residues" evidence="3">
    <location>
        <begin position="1"/>
        <end position="11"/>
    </location>
</feature>
<feature type="modified residue" description="Phosphoserine" evidence="8 9">
    <location>
        <position position="32"/>
    </location>
</feature>
<feature type="modified residue" description="Phosphoserine" evidence="10">
    <location>
        <position position="88"/>
    </location>
</feature>
<feature type="sequence variant" id="VAR_038755" description="In dbSNP:rs7036014.">
    <original>S</original>
    <variation>F</variation>
    <location>
        <position position="291"/>
    </location>
</feature>
<feature type="sequence conflict" description="In Ref. 1; BAA91304." evidence="7" ref="1">
    <original>E</original>
    <variation>G</variation>
    <location>
        <position position="17"/>
    </location>
</feature>
<feature type="sequence conflict" description="In Ref. 1; BAA91206." evidence="7" ref="1">
    <original>M</original>
    <variation>V</variation>
    <location>
        <position position="159"/>
    </location>
</feature>
<feature type="sequence conflict" description="In Ref. 1; BAA91304." evidence="7" ref="1">
    <original>N</original>
    <variation>S</variation>
    <location>
        <position position="305"/>
    </location>
</feature>
<dbReference type="EMBL" id="AK000497">
    <property type="protein sequence ID" value="BAA91206.1"/>
    <property type="status" value="ALT_SEQ"/>
    <property type="molecule type" value="mRNA"/>
</dbReference>
<dbReference type="EMBL" id="AK000646">
    <property type="protein sequence ID" value="BAA91304.1"/>
    <property type="molecule type" value="mRNA"/>
</dbReference>
<dbReference type="EMBL" id="AL136231">
    <property type="status" value="NOT_ANNOTATED_CDS"/>
    <property type="molecule type" value="Genomic_DNA"/>
</dbReference>
<dbReference type="EMBL" id="CH471071">
    <property type="protein sequence ID" value="EAW58782.1"/>
    <property type="molecule type" value="Genomic_DNA"/>
</dbReference>
<dbReference type="EMBL" id="BC014133">
    <property type="protein sequence ID" value="AAH14133.1"/>
    <property type="molecule type" value="mRNA"/>
</dbReference>
<dbReference type="CCDS" id="CCDS6454.1"/>
<dbReference type="RefSeq" id="NP_060383.2">
    <property type="nucleotide sequence ID" value="NM_017913.4"/>
</dbReference>
<dbReference type="SMR" id="Q7L3B6"/>
<dbReference type="BioGRID" id="120796">
    <property type="interactions" value="31"/>
</dbReference>
<dbReference type="FunCoup" id="Q7L3B6">
    <property type="interactions" value="980"/>
</dbReference>
<dbReference type="IntAct" id="Q7L3B6">
    <property type="interactions" value="26"/>
</dbReference>
<dbReference type="STRING" id="9606.ENSP00000371278"/>
<dbReference type="GlyGen" id="Q7L3B6">
    <property type="glycosylation" value="1 site, 1 O-linked glycan (1 site)"/>
</dbReference>
<dbReference type="iPTMnet" id="Q7L3B6"/>
<dbReference type="PhosphoSitePlus" id="Q7L3B6"/>
<dbReference type="BioMuta" id="CDC37L1"/>
<dbReference type="DMDM" id="182705252"/>
<dbReference type="jPOST" id="Q7L3B6"/>
<dbReference type="MassIVE" id="Q7L3B6"/>
<dbReference type="PaxDb" id="9606-ENSP00000371278"/>
<dbReference type="PeptideAtlas" id="Q7L3B6"/>
<dbReference type="ProteomicsDB" id="68770"/>
<dbReference type="Pumba" id="Q7L3B6"/>
<dbReference type="Antibodypedia" id="24046">
    <property type="antibodies" value="198 antibodies from 29 providers"/>
</dbReference>
<dbReference type="DNASU" id="55664"/>
<dbReference type="Ensembl" id="ENST00000381854.4">
    <property type="protein sequence ID" value="ENSP00000371278.3"/>
    <property type="gene ID" value="ENSG00000106993.12"/>
</dbReference>
<dbReference type="GeneID" id="55664"/>
<dbReference type="KEGG" id="hsa:55664"/>
<dbReference type="MANE-Select" id="ENST00000381854.4">
    <property type="protein sequence ID" value="ENSP00000371278.3"/>
    <property type="RefSeq nucleotide sequence ID" value="NM_017913.4"/>
    <property type="RefSeq protein sequence ID" value="NP_060383.2"/>
</dbReference>
<dbReference type="UCSC" id="uc003zio.4">
    <property type="organism name" value="human"/>
</dbReference>
<dbReference type="AGR" id="HGNC:17179"/>
<dbReference type="CTD" id="55664"/>
<dbReference type="DisGeNET" id="55664"/>
<dbReference type="GeneCards" id="CDC37L1"/>
<dbReference type="HGNC" id="HGNC:17179">
    <property type="gene designation" value="CDC37L1"/>
</dbReference>
<dbReference type="HPA" id="ENSG00000106993">
    <property type="expression patterns" value="Tissue enhanced (skeletal)"/>
</dbReference>
<dbReference type="MIM" id="610346">
    <property type="type" value="gene"/>
</dbReference>
<dbReference type="neXtProt" id="NX_Q7L3B6"/>
<dbReference type="OpenTargets" id="ENSG00000106993"/>
<dbReference type="PharmGKB" id="PA134982210"/>
<dbReference type="VEuPathDB" id="HostDB:ENSG00000106993"/>
<dbReference type="eggNOG" id="KOG2260">
    <property type="taxonomic scope" value="Eukaryota"/>
</dbReference>
<dbReference type="GeneTree" id="ENSGT00390000013443"/>
<dbReference type="HOGENOM" id="CLU_046495_1_0_1"/>
<dbReference type="InParanoid" id="Q7L3B6"/>
<dbReference type="OMA" id="YAAKCRN"/>
<dbReference type="OrthoDB" id="440202at2759"/>
<dbReference type="PAN-GO" id="Q7L3B6">
    <property type="GO annotations" value="6 GO annotations based on evolutionary models"/>
</dbReference>
<dbReference type="PhylomeDB" id="Q7L3B6"/>
<dbReference type="TreeFam" id="TF101059"/>
<dbReference type="PathwayCommons" id="Q7L3B6"/>
<dbReference type="Reactome" id="R-HSA-114608">
    <property type="pathway name" value="Platelet degranulation"/>
</dbReference>
<dbReference type="SignaLink" id="Q7L3B6"/>
<dbReference type="BioGRID-ORCS" id="55664">
    <property type="hits" value="16 hits in 1158 CRISPR screens"/>
</dbReference>
<dbReference type="ChiTaRS" id="CDC37L1">
    <property type="organism name" value="human"/>
</dbReference>
<dbReference type="GenomeRNAi" id="55664"/>
<dbReference type="Pharos" id="Q7L3B6">
    <property type="development level" value="Tbio"/>
</dbReference>
<dbReference type="PRO" id="PR:Q7L3B6"/>
<dbReference type="Proteomes" id="UP000005640">
    <property type="component" value="Chromosome 9"/>
</dbReference>
<dbReference type="RNAct" id="Q7L3B6">
    <property type="molecule type" value="protein"/>
</dbReference>
<dbReference type="Bgee" id="ENSG00000106993">
    <property type="expression patterns" value="Expressed in gastrocnemius and 200 other cell types or tissues"/>
</dbReference>
<dbReference type="ExpressionAtlas" id="Q7L3B6">
    <property type="expression patterns" value="baseline and differential"/>
</dbReference>
<dbReference type="GO" id="GO:0005737">
    <property type="term" value="C:cytoplasm"/>
    <property type="evidence" value="ECO:0000318"/>
    <property type="project" value="GO_Central"/>
</dbReference>
<dbReference type="GO" id="GO:0005829">
    <property type="term" value="C:cytosol"/>
    <property type="evidence" value="ECO:0000314"/>
    <property type="project" value="HPA"/>
</dbReference>
<dbReference type="GO" id="GO:0005576">
    <property type="term" value="C:extracellular region"/>
    <property type="evidence" value="ECO:0000304"/>
    <property type="project" value="Reactome"/>
</dbReference>
<dbReference type="GO" id="GO:0031089">
    <property type="term" value="C:platelet dense granule lumen"/>
    <property type="evidence" value="ECO:0000304"/>
    <property type="project" value="Reactome"/>
</dbReference>
<dbReference type="GO" id="GO:0031072">
    <property type="term" value="F:heat shock protein binding"/>
    <property type="evidence" value="ECO:0000318"/>
    <property type="project" value="GO_Central"/>
</dbReference>
<dbReference type="GO" id="GO:0051087">
    <property type="term" value="F:protein-folding chaperone binding"/>
    <property type="evidence" value="ECO:0000318"/>
    <property type="project" value="GO_Central"/>
</dbReference>
<dbReference type="GO" id="GO:0051082">
    <property type="term" value="F:unfolded protein binding"/>
    <property type="evidence" value="ECO:0000318"/>
    <property type="project" value="GO_Central"/>
</dbReference>
<dbReference type="GO" id="GO:0006457">
    <property type="term" value="P:protein folding"/>
    <property type="evidence" value="ECO:0000318"/>
    <property type="project" value="GO_Central"/>
</dbReference>
<dbReference type="GO" id="GO:0050821">
    <property type="term" value="P:protein stabilization"/>
    <property type="evidence" value="ECO:0000318"/>
    <property type="project" value="GO_Central"/>
</dbReference>
<dbReference type="FunFam" id="1.20.58.610:FF:000001">
    <property type="entry name" value="Hsp90 co-chaperone Cdc37-like 1"/>
    <property type="match status" value="1"/>
</dbReference>
<dbReference type="Gene3D" id="1.20.58.610">
    <property type="entry name" value="Cdc37, Hsp90 binding domain"/>
    <property type="match status" value="1"/>
</dbReference>
<dbReference type="InterPro" id="IPR004918">
    <property type="entry name" value="Cdc37"/>
</dbReference>
<dbReference type="InterPro" id="IPR013874">
    <property type="entry name" value="Cdc37_Hsp90-bd"/>
</dbReference>
<dbReference type="InterPro" id="IPR038189">
    <property type="entry name" value="Cdc37_Hsp90-bd_sf"/>
</dbReference>
<dbReference type="PANTHER" id="PTHR12800">
    <property type="entry name" value="CDC37-RELATED"/>
    <property type="match status" value="1"/>
</dbReference>
<dbReference type="PANTHER" id="PTHR12800:SF2">
    <property type="entry name" value="HSP90 CO-CHAPERONE CDC37-LIKE 1"/>
    <property type="match status" value="1"/>
</dbReference>
<dbReference type="Pfam" id="PF08565">
    <property type="entry name" value="CDC37_M"/>
    <property type="match status" value="1"/>
</dbReference>
<dbReference type="SMART" id="SM01070">
    <property type="entry name" value="CDC37_M"/>
    <property type="match status" value="1"/>
</dbReference>
<dbReference type="SUPFAM" id="SSF101391">
    <property type="entry name" value="Hsp90 co-chaperone CDC37"/>
    <property type="match status" value="1"/>
</dbReference>
<gene>
    <name type="primary">CDC37L1</name>
    <name type="synonym">CDC37B</name>
    <name type="synonym">HARC</name>
</gene>
<organism>
    <name type="scientific">Homo sapiens</name>
    <name type="common">Human</name>
    <dbReference type="NCBI Taxonomy" id="9606"/>
    <lineage>
        <taxon>Eukaryota</taxon>
        <taxon>Metazoa</taxon>
        <taxon>Chordata</taxon>
        <taxon>Craniata</taxon>
        <taxon>Vertebrata</taxon>
        <taxon>Euteleostomi</taxon>
        <taxon>Mammalia</taxon>
        <taxon>Eutheria</taxon>
        <taxon>Euarchontoglires</taxon>
        <taxon>Primates</taxon>
        <taxon>Haplorrhini</taxon>
        <taxon>Catarrhini</taxon>
        <taxon>Hominidae</taxon>
        <taxon>Homo</taxon>
    </lineage>
</organism>
<comment type="function">
    <text evidence="1">Co-chaperone that binds to numerous proteins and promotes their interaction with Hsp70 and Hsp90.</text>
</comment>
<comment type="subunit">
    <text evidence="4 5 6">Self-associates. Forms complexes with Hsp70 and Hsp90. Interacts with CDC37, FKBP4, PPID and STIP1.</text>
</comment>
<comment type="interaction">
    <interactant intactId="EBI-2841876">
        <id>Q7L3B6</id>
    </interactant>
    <interactant intactId="EBI-2837444">
        <id>Q8WUW1</id>
        <label>BRK1</label>
    </interactant>
    <organismsDiffer>false</organismsDiffer>
    <experiments>3</experiments>
</comment>
<comment type="interaction">
    <interactant intactId="EBI-2841876">
        <id>Q7L3B6</id>
    </interactant>
    <interactant intactId="EBI-296047">
        <id>P07900</id>
        <label>HSP90AA1</label>
    </interactant>
    <organismsDiffer>false</organismsDiffer>
    <experiments>3</experiments>
</comment>
<comment type="interaction">
    <interactant intactId="EBI-2841876">
        <id>Q7L3B6</id>
    </interactant>
    <interactant intactId="EBI-352572">
        <id>P08238</id>
        <label>HSP90AB1</label>
    </interactant>
    <organismsDiffer>false</organismsDiffer>
    <experiments>8</experiments>
</comment>
<comment type="interaction">
    <interactant intactId="EBI-2841876">
        <id>Q7L3B6</id>
    </interactant>
    <interactant intactId="EBI-9356629">
        <id>Q6PK50</id>
        <label>HSP90AB1</label>
    </interactant>
    <organismsDiffer>false</organismsDiffer>
    <experiments>2</experiments>
</comment>
<comment type="interaction">
    <interactant intactId="EBI-2841876">
        <id>Q7L3B6</id>
    </interactant>
    <interactant intactId="EBI-1054052">
        <id>P31948</id>
        <label>STIP1</label>
    </interactant>
    <organismsDiffer>false</organismsDiffer>
    <experiments>2</experiments>
</comment>
<comment type="subcellular location">
    <subcellularLocation>
        <location evidence="4">Cytoplasm</location>
    </subcellularLocation>
</comment>
<comment type="tissue specificity">
    <text evidence="4">Expressed in brain, heart, kidney, liver, placenta and skeletal muscle.</text>
</comment>
<comment type="similarity">
    <text evidence="7">Belongs to the CDC37 family.</text>
</comment>
<comment type="sequence caution" evidence="7">
    <conflict type="erroneous termination">
        <sequence resource="EMBL-CDS" id="BAA91206"/>
    </conflict>
    <text>Truncated C-terminus.</text>
</comment>
<reference key="1">
    <citation type="journal article" date="2004" name="Nat. Genet.">
        <title>Complete sequencing and characterization of 21,243 full-length human cDNAs.</title>
        <authorList>
            <person name="Ota T."/>
            <person name="Suzuki Y."/>
            <person name="Nishikawa T."/>
            <person name="Otsuki T."/>
            <person name="Sugiyama T."/>
            <person name="Irie R."/>
            <person name="Wakamatsu A."/>
            <person name="Hayashi K."/>
            <person name="Sato H."/>
            <person name="Nagai K."/>
            <person name="Kimura K."/>
            <person name="Makita H."/>
            <person name="Sekine M."/>
            <person name="Obayashi M."/>
            <person name="Nishi T."/>
            <person name="Shibahara T."/>
            <person name="Tanaka T."/>
            <person name="Ishii S."/>
            <person name="Yamamoto J."/>
            <person name="Saito K."/>
            <person name="Kawai Y."/>
            <person name="Isono Y."/>
            <person name="Nakamura Y."/>
            <person name="Nagahari K."/>
            <person name="Murakami K."/>
            <person name="Yasuda T."/>
            <person name="Iwayanagi T."/>
            <person name="Wagatsuma M."/>
            <person name="Shiratori A."/>
            <person name="Sudo H."/>
            <person name="Hosoiri T."/>
            <person name="Kaku Y."/>
            <person name="Kodaira H."/>
            <person name="Kondo H."/>
            <person name="Sugawara M."/>
            <person name="Takahashi M."/>
            <person name="Kanda K."/>
            <person name="Yokoi T."/>
            <person name="Furuya T."/>
            <person name="Kikkawa E."/>
            <person name="Omura Y."/>
            <person name="Abe K."/>
            <person name="Kamihara K."/>
            <person name="Katsuta N."/>
            <person name="Sato K."/>
            <person name="Tanikawa M."/>
            <person name="Yamazaki M."/>
            <person name="Ninomiya K."/>
            <person name="Ishibashi T."/>
            <person name="Yamashita H."/>
            <person name="Murakawa K."/>
            <person name="Fujimori K."/>
            <person name="Tanai H."/>
            <person name="Kimata M."/>
            <person name="Watanabe M."/>
            <person name="Hiraoka S."/>
            <person name="Chiba Y."/>
            <person name="Ishida S."/>
            <person name="Ono Y."/>
            <person name="Takiguchi S."/>
            <person name="Watanabe S."/>
            <person name="Yosida M."/>
            <person name="Hotuta T."/>
            <person name="Kusano J."/>
            <person name="Kanehori K."/>
            <person name="Takahashi-Fujii A."/>
            <person name="Hara H."/>
            <person name="Tanase T.-O."/>
            <person name="Nomura Y."/>
            <person name="Togiya S."/>
            <person name="Komai F."/>
            <person name="Hara R."/>
            <person name="Takeuchi K."/>
            <person name="Arita M."/>
            <person name="Imose N."/>
            <person name="Musashino K."/>
            <person name="Yuuki H."/>
            <person name="Oshima A."/>
            <person name="Sasaki N."/>
            <person name="Aotsuka S."/>
            <person name="Yoshikawa Y."/>
            <person name="Matsunawa H."/>
            <person name="Ichihara T."/>
            <person name="Shiohata N."/>
            <person name="Sano S."/>
            <person name="Moriya S."/>
            <person name="Momiyama H."/>
            <person name="Satoh N."/>
            <person name="Takami S."/>
            <person name="Terashima Y."/>
            <person name="Suzuki O."/>
            <person name="Nakagawa S."/>
            <person name="Senoh A."/>
            <person name="Mizoguchi H."/>
            <person name="Goto Y."/>
            <person name="Shimizu F."/>
            <person name="Wakebe H."/>
            <person name="Hishigaki H."/>
            <person name="Watanabe T."/>
            <person name="Sugiyama A."/>
            <person name="Takemoto M."/>
            <person name="Kawakami B."/>
            <person name="Yamazaki M."/>
            <person name="Watanabe K."/>
            <person name="Kumagai A."/>
            <person name="Itakura S."/>
            <person name="Fukuzumi Y."/>
            <person name="Fujimori Y."/>
            <person name="Komiyama M."/>
            <person name="Tashiro H."/>
            <person name="Tanigami A."/>
            <person name="Fujiwara T."/>
            <person name="Ono T."/>
            <person name="Yamada K."/>
            <person name="Fujii Y."/>
            <person name="Ozaki K."/>
            <person name="Hirao M."/>
            <person name="Ohmori Y."/>
            <person name="Kawabata A."/>
            <person name="Hikiji T."/>
            <person name="Kobatake N."/>
            <person name="Inagaki H."/>
            <person name="Ikema Y."/>
            <person name="Okamoto S."/>
            <person name="Okitani R."/>
            <person name="Kawakami T."/>
            <person name="Noguchi S."/>
            <person name="Itoh T."/>
            <person name="Shigeta K."/>
            <person name="Senba T."/>
            <person name="Matsumura K."/>
            <person name="Nakajima Y."/>
            <person name="Mizuno T."/>
            <person name="Morinaga M."/>
            <person name="Sasaki M."/>
            <person name="Togashi T."/>
            <person name="Oyama M."/>
            <person name="Hata H."/>
            <person name="Watanabe M."/>
            <person name="Komatsu T."/>
            <person name="Mizushima-Sugano J."/>
            <person name="Satoh T."/>
            <person name="Shirai Y."/>
            <person name="Takahashi Y."/>
            <person name="Nakagawa K."/>
            <person name="Okumura K."/>
            <person name="Nagase T."/>
            <person name="Nomura N."/>
            <person name="Kikuchi H."/>
            <person name="Masuho Y."/>
            <person name="Yamashita R."/>
            <person name="Nakai K."/>
            <person name="Yada T."/>
            <person name="Nakamura Y."/>
            <person name="Ohara O."/>
            <person name="Isogai T."/>
            <person name="Sugano S."/>
        </authorList>
    </citation>
    <scope>NUCLEOTIDE SEQUENCE [LARGE SCALE MRNA]</scope>
    <source>
        <tissue>Signet-ring cell carcinoma</tissue>
    </source>
</reference>
<reference key="2">
    <citation type="journal article" date="2004" name="Nature">
        <title>DNA sequence and analysis of human chromosome 9.</title>
        <authorList>
            <person name="Humphray S.J."/>
            <person name="Oliver K."/>
            <person name="Hunt A.R."/>
            <person name="Plumb R.W."/>
            <person name="Loveland J.E."/>
            <person name="Howe K.L."/>
            <person name="Andrews T.D."/>
            <person name="Searle S."/>
            <person name="Hunt S.E."/>
            <person name="Scott C.E."/>
            <person name="Jones M.C."/>
            <person name="Ainscough R."/>
            <person name="Almeida J.P."/>
            <person name="Ambrose K.D."/>
            <person name="Ashwell R.I.S."/>
            <person name="Babbage A.K."/>
            <person name="Babbage S."/>
            <person name="Bagguley C.L."/>
            <person name="Bailey J."/>
            <person name="Banerjee R."/>
            <person name="Barker D.J."/>
            <person name="Barlow K.F."/>
            <person name="Bates K."/>
            <person name="Beasley H."/>
            <person name="Beasley O."/>
            <person name="Bird C.P."/>
            <person name="Bray-Allen S."/>
            <person name="Brown A.J."/>
            <person name="Brown J.Y."/>
            <person name="Burford D."/>
            <person name="Burrill W."/>
            <person name="Burton J."/>
            <person name="Carder C."/>
            <person name="Carter N.P."/>
            <person name="Chapman J.C."/>
            <person name="Chen Y."/>
            <person name="Clarke G."/>
            <person name="Clark S.Y."/>
            <person name="Clee C.M."/>
            <person name="Clegg S."/>
            <person name="Collier R.E."/>
            <person name="Corby N."/>
            <person name="Crosier M."/>
            <person name="Cummings A.T."/>
            <person name="Davies J."/>
            <person name="Dhami P."/>
            <person name="Dunn M."/>
            <person name="Dutta I."/>
            <person name="Dyer L.W."/>
            <person name="Earthrowl M.E."/>
            <person name="Faulkner L."/>
            <person name="Fleming C.J."/>
            <person name="Frankish A."/>
            <person name="Frankland J.A."/>
            <person name="French L."/>
            <person name="Fricker D.G."/>
            <person name="Garner P."/>
            <person name="Garnett J."/>
            <person name="Ghori J."/>
            <person name="Gilbert J.G.R."/>
            <person name="Glison C."/>
            <person name="Grafham D.V."/>
            <person name="Gribble S."/>
            <person name="Griffiths C."/>
            <person name="Griffiths-Jones S."/>
            <person name="Grocock R."/>
            <person name="Guy J."/>
            <person name="Hall R.E."/>
            <person name="Hammond S."/>
            <person name="Harley J.L."/>
            <person name="Harrison E.S.I."/>
            <person name="Hart E.A."/>
            <person name="Heath P.D."/>
            <person name="Henderson C.D."/>
            <person name="Hopkins B.L."/>
            <person name="Howard P.J."/>
            <person name="Howden P.J."/>
            <person name="Huckle E."/>
            <person name="Johnson C."/>
            <person name="Johnson D."/>
            <person name="Joy A.A."/>
            <person name="Kay M."/>
            <person name="Keenan S."/>
            <person name="Kershaw J.K."/>
            <person name="Kimberley A.M."/>
            <person name="King A."/>
            <person name="Knights A."/>
            <person name="Laird G.K."/>
            <person name="Langford C."/>
            <person name="Lawlor S."/>
            <person name="Leongamornlert D.A."/>
            <person name="Leversha M."/>
            <person name="Lloyd C."/>
            <person name="Lloyd D.M."/>
            <person name="Lovell J."/>
            <person name="Martin S."/>
            <person name="Mashreghi-Mohammadi M."/>
            <person name="Matthews L."/>
            <person name="McLaren S."/>
            <person name="McLay K.E."/>
            <person name="McMurray A."/>
            <person name="Milne S."/>
            <person name="Nickerson T."/>
            <person name="Nisbett J."/>
            <person name="Nordsiek G."/>
            <person name="Pearce A.V."/>
            <person name="Peck A.I."/>
            <person name="Porter K.M."/>
            <person name="Pandian R."/>
            <person name="Pelan S."/>
            <person name="Phillimore B."/>
            <person name="Povey S."/>
            <person name="Ramsey Y."/>
            <person name="Rand V."/>
            <person name="Scharfe M."/>
            <person name="Sehra H.K."/>
            <person name="Shownkeen R."/>
            <person name="Sims S.K."/>
            <person name="Skuce C.D."/>
            <person name="Smith M."/>
            <person name="Steward C.A."/>
            <person name="Swarbreck D."/>
            <person name="Sycamore N."/>
            <person name="Tester J."/>
            <person name="Thorpe A."/>
            <person name="Tracey A."/>
            <person name="Tromans A."/>
            <person name="Thomas D.W."/>
            <person name="Wall M."/>
            <person name="Wallis J.M."/>
            <person name="West A.P."/>
            <person name="Whitehead S.L."/>
            <person name="Willey D.L."/>
            <person name="Williams S.A."/>
            <person name="Wilming L."/>
            <person name="Wray P.W."/>
            <person name="Young L."/>
            <person name="Ashurst J.L."/>
            <person name="Coulson A."/>
            <person name="Blocker H."/>
            <person name="Durbin R.M."/>
            <person name="Sulston J.E."/>
            <person name="Hubbard T."/>
            <person name="Jackson M.J."/>
            <person name="Bentley D.R."/>
            <person name="Beck S."/>
            <person name="Rogers J."/>
            <person name="Dunham I."/>
        </authorList>
    </citation>
    <scope>NUCLEOTIDE SEQUENCE [LARGE SCALE GENOMIC DNA]</scope>
</reference>
<reference key="3">
    <citation type="submission" date="2005-09" db="EMBL/GenBank/DDBJ databases">
        <authorList>
            <person name="Mural R.J."/>
            <person name="Istrail S."/>
            <person name="Sutton G.G."/>
            <person name="Florea L."/>
            <person name="Halpern A.L."/>
            <person name="Mobarry C.M."/>
            <person name="Lippert R."/>
            <person name="Walenz B."/>
            <person name="Shatkay H."/>
            <person name="Dew I."/>
            <person name="Miller J.R."/>
            <person name="Flanigan M.J."/>
            <person name="Edwards N.J."/>
            <person name="Bolanos R."/>
            <person name="Fasulo D."/>
            <person name="Halldorsson B.V."/>
            <person name="Hannenhalli S."/>
            <person name="Turner R."/>
            <person name="Yooseph S."/>
            <person name="Lu F."/>
            <person name="Nusskern D.R."/>
            <person name="Shue B.C."/>
            <person name="Zheng X.H."/>
            <person name="Zhong F."/>
            <person name="Delcher A.L."/>
            <person name="Huson D.H."/>
            <person name="Kravitz S.A."/>
            <person name="Mouchard L."/>
            <person name="Reinert K."/>
            <person name="Remington K.A."/>
            <person name="Clark A.G."/>
            <person name="Waterman M.S."/>
            <person name="Eichler E.E."/>
            <person name="Adams M.D."/>
            <person name="Hunkapiller M.W."/>
            <person name="Myers E.W."/>
            <person name="Venter J.C."/>
        </authorList>
    </citation>
    <scope>NUCLEOTIDE SEQUENCE [LARGE SCALE GENOMIC DNA]</scope>
</reference>
<reference key="4">
    <citation type="journal article" date="2004" name="Genome Res.">
        <title>The status, quality, and expansion of the NIH full-length cDNA project: the Mammalian Gene Collection (MGC).</title>
        <authorList>
            <consortium name="The MGC Project Team"/>
        </authorList>
    </citation>
    <scope>NUCLEOTIDE SEQUENCE [LARGE SCALE MRNA]</scope>
    <source>
        <tissue>Lung</tissue>
    </source>
</reference>
<reference key="5">
    <citation type="journal article" date="2001" name="J. Biol. Chem.">
        <title>Identification and characterization of Harc, a novel Hsp90-associating relative of Cdc37.</title>
        <authorList>
            <person name="Scholz G.M."/>
            <person name="Cartledge K."/>
            <person name="Hall N.E."/>
        </authorList>
    </citation>
    <scope>INTERACTION WITH FKBP4; HSP70; HSP90; PPID AND STIP1</scope>
    <scope>SUBCELLULAR LOCATION</scope>
    <scope>TISSUE SPECIFICITY</scope>
    <scope>PHOSPHORYLATION</scope>
</reference>
<reference key="6">
    <citation type="journal article" date="2005" name="Biochemistry">
        <title>Domain-mediated dimerization of the Hsp90 cochaperones Harc and Cdc37.</title>
        <authorList>
            <person name="Roiniotis J."/>
            <person name="Masendycz P."/>
            <person name="Ho S."/>
            <person name="Scholz G.M."/>
        </authorList>
    </citation>
    <scope>SELF-ASSOCIATION</scope>
    <scope>INTERACTION WITH CDC37 AND HSP90</scope>
</reference>
<reference key="7">
    <citation type="journal article" date="2007" name="Biochemistry">
        <title>Importance of the C-terminal domain of harc for binding to hsp70 and hop as well as its response to heat shock.</title>
        <authorList>
            <person name="Cartledge K."/>
            <person name="Elsegood C."/>
            <person name="Roiniotis J."/>
            <person name="Hamilton J.A."/>
            <person name="Scholz G.M."/>
        </authorList>
    </citation>
    <scope>SELF-ASSOCIATION</scope>
    <scope>INTERACTION WITH HSP70; HSP90 AND STIP1</scope>
</reference>
<reference key="8">
    <citation type="journal article" date="2008" name="Proc. Natl. Acad. Sci. U.S.A.">
        <title>A quantitative atlas of mitotic phosphorylation.</title>
        <authorList>
            <person name="Dephoure N."/>
            <person name="Zhou C."/>
            <person name="Villen J."/>
            <person name="Beausoleil S.A."/>
            <person name="Bakalarski C.E."/>
            <person name="Elledge S.J."/>
            <person name="Gygi S.P."/>
        </authorList>
    </citation>
    <scope>PHOSPHORYLATION [LARGE SCALE ANALYSIS] AT SER-32</scope>
    <scope>IDENTIFICATION BY MASS SPECTROMETRY [LARGE SCALE ANALYSIS]</scope>
    <source>
        <tissue>Cervix carcinoma</tissue>
    </source>
</reference>
<reference key="9">
    <citation type="journal article" date="2009" name="Sci. Signal.">
        <title>Quantitative phosphoproteomic analysis of T cell receptor signaling reveals system-wide modulation of protein-protein interactions.</title>
        <authorList>
            <person name="Mayya V."/>
            <person name="Lundgren D.H."/>
            <person name="Hwang S.-I."/>
            <person name="Rezaul K."/>
            <person name="Wu L."/>
            <person name="Eng J.K."/>
            <person name="Rodionov V."/>
            <person name="Han D.K."/>
        </authorList>
    </citation>
    <scope>PHOSPHORYLATION [LARGE SCALE ANALYSIS] AT SER-32</scope>
    <scope>IDENTIFICATION BY MASS SPECTROMETRY [LARGE SCALE ANALYSIS]</scope>
    <source>
        <tissue>Leukemic T-cell</tissue>
    </source>
</reference>
<reference key="10">
    <citation type="journal article" date="2011" name="BMC Syst. Biol.">
        <title>Initial characterization of the human central proteome.</title>
        <authorList>
            <person name="Burkard T.R."/>
            <person name="Planyavsky M."/>
            <person name="Kaupe I."/>
            <person name="Breitwieser F.P."/>
            <person name="Buerckstuemmer T."/>
            <person name="Bennett K.L."/>
            <person name="Superti-Furga G."/>
            <person name="Colinge J."/>
        </authorList>
    </citation>
    <scope>IDENTIFICATION BY MASS SPECTROMETRY [LARGE SCALE ANALYSIS]</scope>
</reference>
<reference key="11">
    <citation type="journal article" date="2013" name="J. Proteome Res.">
        <title>Toward a comprehensive characterization of a human cancer cell phosphoproteome.</title>
        <authorList>
            <person name="Zhou H."/>
            <person name="Di Palma S."/>
            <person name="Preisinger C."/>
            <person name="Peng M."/>
            <person name="Polat A.N."/>
            <person name="Heck A.J."/>
            <person name="Mohammed S."/>
        </authorList>
    </citation>
    <scope>PHOSPHORYLATION [LARGE SCALE ANALYSIS] AT SER-88</scope>
    <scope>IDENTIFICATION BY MASS SPECTROMETRY [LARGE SCALE ANALYSIS]</scope>
    <source>
        <tissue>Erythroleukemia</tissue>
    </source>
</reference>
<reference key="12">
    <citation type="journal article" date="2014" name="J. Proteomics">
        <title>An enzyme assisted RP-RPLC approach for in-depth analysis of human liver phosphoproteome.</title>
        <authorList>
            <person name="Bian Y."/>
            <person name="Song C."/>
            <person name="Cheng K."/>
            <person name="Dong M."/>
            <person name="Wang F."/>
            <person name="Huang J."/>
            <person name="Sun D."/>
            <person name="Wang L."/>
            <person name="Ye M."/>
            <person name="Zou H."/>
        </authorList>
    </citation>
    <scope>IDENTIFICATION BY MASS SPECTROMETRY [LARGE SCALE ANALYSIS]</scope>
    <source>
        <tissue>Liver</tissue>
    </source>
</reference>
<protein>
    <recommendedName>
        <fullName>Hsp90 co-chaperone Cdc37-like 1</fullName>
    </recommendedName>
    <alternativeName>
        <fullName>Hsp90-associating relative of Cdc37</fullName>
    </alternativeName>
</protein>
<evidence type="ECO:0000250" key="1"/>
<evidence type="ECO:0000255" key="2"/>
<evidence type="ECO:0000256" key="3">
    <source>
        <dbReference type="SAM" id="MobiDB-lite"/>
    </source>
</evidence>
<evidence type="ECO:0000269" key="4">
    <source>
    </source>
</evidence>
<evidence type="ECO:0000269" key="5">
    <source>
    </source>
</evidence>
<evidence type="ECO:0000269" key="6">
    <source>
    </source>
</evidence>
<evidence type="ECO:0000305" key="7"/>
<evidence type="ECO:0007744" key="8">
    <source>
    </source>
</evidence>
<evidence type="ECO:0007744" key="9">
    <source>
    </source>
</evidence>
<evidence type="ECO:0007744" key="10">
    <source>
    </source>
</evidence>
<accession>Q7L3B6</accession>
<accession>B1AL70</accession>
<accession>Q9NWS3</accession>
<accession>Q9NX16</accession>
<keyword id="KW-0143">Chaperone</keyword>
<keyword id="KW-0175">Coiled coil</keyword>
<keyword id="KW-0963">Cytoplasm</keyword>
<keyword id="KW-0597">Phosphoprotein</keyword>
<keyword id="KW-1267">Proteomics identification</keyword>
<keyword id="KW-1185">Reference proteome</keyword>
<sequence length="337" mass="38835">MEQPWPPPGPWSLPRAEGEAEEESDFDVFPSSPRCPQLPGGGAQMYSHGIELACQKQKEFVKSSVACKWNLAEAQQKLGSLALHNSESLDQEHAKAQTAVSELRQREEEWRQKEEALVQREKMCLWSTDAISKDVFNKSFINQDKRKDTEDEDKSESFMQKYEQKIRHFGMLSRWDDSQRFLSDHPYLVCEETAKYLILWCFHLEAEKKGALMEQIAHQAVVMQFIMEMAKNCNVDPRGCFRLFFQKAKAEEEGYFEAFKNELEAFKSRVRLYSQSQSFQPMTVQNHVPHSGVGSIGLLESLPQNPDYLQYSISTALCSLNSVVHKEDDEPKMMDTV</sequence>
<proteinExistence type="evidence at protein level"/>